<keyword id="KW-0134">Cell wall</keyword>
<keyword id="KW-0326">Glycosidase</keyword>
<keyword id="KW-0378">Hydrolase</keyword>
<keyword id="KW-0572">Peptidoglycan-anchor</keyword>
<keyword id="KW-1185">Reference proteome</keyword>
<keyword id="KW-0964">Secreted</keyword>
<keyword id="KW-0732">Signal</keyword>
<organism>
    <name type="scientific">Streptococcus mutans serotype c (strain ATCC 700610 / UA159)</name>
    <dbReference type="NCBI Taxonomy" id="210007"/>
    <lineage>
        <taxon>Bacteria</taxon>
        <taxon>Bacillati</taxon>
        <taxon>Bacillota</taxon>
        <taxon>Bacilli</taxon>
        <taxon>Lactobacillales</taxon>
        <taxon>Streptococcaceae</taxon>
        <taxon>Streptococcus</taxon>
    </lineage>
</organism>
<accession>Q03174</accession>
<name>FRUA_STRMU</name>
<evidence type="ECO:0000250" key="1"/>
<evidence type="ECO:0000255" key="2"/>
<evidence type="ECO:0000255" key="3">
    <source>
        <dbReference type="PROSITE-ProRule" id="PRU00477"/>
    </source>
</evidence>
<evidence type="ECO:0000255" key="4">
    <source>
        <dbReference type="PROSITE-ProRule" id="PRU10067"/>
    </source>
</evidence>
<evidence type="ECO:0000256" key="5">
    <source>
        <dbReference type="SAM" id="MobiDB-lite"/>
    </source>
</evidence>
<evidence type="ECO:0000305" key="6"/>
<reference key="1">
    <citation type="journal article" date="1992" name="Infect. Immun.">
        <title>Characterization of the Streptococcus mutans GS-5 fruA gene encoding exo-beta-D-fructosidase.</title>
        <authorList>
            <person name="Burne R.A."/>
            <person name="Penders J.E.C."/>
        </authorList>
    </citation>
    <scope>NUCLEOTIDE SEQUENCE [GENOMIC DNA]</scope>
    <source>
        <strain>GS-5</strain>
    </source>
</reference>
<reference key="2">
    <citation type="journal article" date="2002" name="Proc. Natl. Acad. Sci. U.S.A.">
        <title>Genome sequence of Streptococcus mutans UA159, a cariogenic dental pathogen.</title>
        <authorList>
            <person name="Ajdic D.J."/>
            <person name="McShan W.M."/>
            <person name="McLaughlin R.E."/>
            <person name="Savic G."/>
            <person name="Chang J."/>
            <person name="Carson M.B."/>
            <person name="Primeaux C."/>
            <person name="Tian R."/>
            <person name="Kenton S."/>
            <person name="Jia H.G."/>
            <person name="Lin S.P."/>
            <person name="Qian Y."/>
            <person name="Li S."/>
            <person name="Zhu H."/>
            <person name="Najar F.Z."/>
            <person name="Lai H."/>
            <person name="White J."/>
            <person name="Roe B.A."/>
            <person name="Ferretti J.J."/>
        </authorList>
    </citation>
    <scope>NUCLEOTIDE SEQUENCE [LARGE SCALE GENOMIC DNA]</scope>
    <source>
        <strain>ATCC 700610 / UA159</strain>
    </source>
</reference>
<feature type="signal peptide" evidence="2">
    <location>
        <begin position="1"/>
        <end position="39"/>
    </location>
</feature>
<feature type="chain" id="PRO_0000033406" description="Fructan beta-fructosidase">
    <location>
        <begin position="40"/>
        <end position="1391"/>
    </location>
</feature>
<feature type="propeptide" id="PRO_0000033407" description="Removed by sortase" evidence="3">
    <location>
        <begin position="1392"/>
        <end position="1423"/>
    </location>
</feature>
<feature type="domain" description="BIG2" evidence="2">
    <location>
        <begin position="924"/>
        <end position="1002"/>
    </location>
</feature>
<feature type="region of interest" description="Disordered" evidence="5">
    <location>
        <begin position="44"/>
        <end position="161"/>
    </location>
</feature>
<feature type="region of interest" description="Involved in binding of sugars with beta-(2,6) linkages or binding of molecular weight fructans" evidence="1">
    <location>
        <begin position="867"/>
        <end position="871"/>
    </location>
</feature>
<feature type="region of interest" description="Disordered" evidence="5">
    <location>
        <begin position="1368"/>
        <end position="1394"/>
    </location>
</feature>
<feature type="short sequence motif" description="LPXTG sorting signal" evidence="3">
    <location>
        <begin position="1388"/>
        <end position="1392"/>
    </location>
</feature>
<feature type="compositionally biased region" description="Polar residues" evidence="5">
    <location>
        <begin position="69"/>
        <end position="126"/>
    </location>
</feature>
<feature type="compositionally biased region" description="Polar residues" evidence="5">
    <location>
        <begin position="1368"/>
        <end position="1385"/>
    </location>
</feature>
<feature type="active site" evidence="4">
    <location>
        <position position="458"/>
    </location>
</feature>
<feature type="binding site" evidence="1">
    <location>
        <begin position="455"/>
        <end position="458"/>
    </location>
    <ligand>
        <name>substrate</name>
    </ligand>
</feature>
<feature type="binding site" evidence="1">
    <location>
        <position position="474"/>
    </location>
    <ligand>
        <name>substrate</name>
    </ligand>
</feature>
<feature type="binding site" evidence="1">
    <location>
        <begin position="513"/>
        <end position="514"/>
    </location>
    <ligand>
        <name>substrate</name>
    </ligand>
</feature>
<feature type="binding site" evidence="1">
    <location>
        <begin position="581"/>
        <end position="582"/>
    </location>
    <ligand>
        <name>substrate</name>
    </ligand>
</feature>
<feature type="binding site" evidence="1">
    <location>
        <position position="783"/>
    </location>
    <ligand>
        <name>substrate</name>
    </ligand>
</feature>
<feature type="modified residue" description="Pentaglycyl murein peptidoglycan amidated threonine" evidence="3">
    <location>
        <position position="1391"/>
    </location>
</feature>
<feature type="sequence conflict" description="In Ref. 1; AAA26889." evidence="6" ref="1">
    <original>G</original>
    <variation>E</variation>
    <location>
        <position position="78"/>
    </location>
</feature>
<feature type="sequence conflict" description="In Ref. 1; AAA26889." evidence="6" ref="1">
    <original>I</original>
    <variation>V</variation>
    <location>
        <position position="280"/>
    </location>
</feature>
<feature type="sequence conflict" description="In Ref. 1; AAA26889." evidence="6" ref="1">
    <original>S</original>
    <variation>T</variation>
    <location>
        <position position="942"/>
    </location>
</feature>
<feature type="sequence conflict" description="In Ref. 1; AAA26889." evidence="6" ref="1">
    <original>T</original>
    <variation>I</variation>
    <location>
        <position position="1002"/>
    </location>
</feature>
<feature type="sequence conflict" description="In Ref. 1; AAA26889." evidence="6" ref="1">
    <original>N</original>
    <variation>S</variation>
    <location>
        <position position="1290"/>
    </location>
</feature>
<feature type="sequence conflict" description="In Ref. 1; AAA26889." evidence="6" ref="1">
    <original>P</original>
    <variation>S</variation>
    <location>
        <position position="1384"/>
    </location>
</feature>
<feature type="sequence conflict" description="In Ref. 1; AAA26889." evidence="6" ref="1">
    <original>G</original>
    <variation>S</variation>
    <location>
        <position position="1416"/>
    </location>
</feature>
<feature type="sequence conflict" description="In Ref. 1; AAA26889." evidence="6" ref="1">
    <original>R</original>
    <variation>S</variation>
    <location>
        <position position="1421"/>
    </location>
</feature>
<proteinExistence type="evidence at transcript level"/>
<protein>
    <recommendedName>
        <fullName>Fructan beta-fructosidase</fullName>
        <ecNumber>3.2.1.80</ecNumber>
    </recommendedName>
    <alternativeName>
        <fullName>Exo-beta-D-fructosidase</fullName>
    </alternativeName>
    <alternativeName>
        <fullName>Fructanase</fullName>
    </alternativeName>
</protein>
<gene>
    <name type="primary">fruA</name>
    <name type="ordered locus">SMU_78</name>
</gene>
<sequence length="1423" mass="158660">MEEETVCKNWFMRKSGKSWIFGCAVFFVLGLATALPVAAEEISQTTAADTAVTEVRTEDSSQTSSQETAVTETTQSEGTASKQLTTPAVADQTTEPTDNEPISSSDGASSPYQVTDTTEPQQTLTPADSEPQAKADVQQAAAPKKEEINPVTNLEDMSHDTNGTWEVREDGIHSNAIGKGDSFLYSQSSGKNFVYATDVTFKQNSGAAALVFRSNNDSNNKNMYAVNVDIGGHKAKFWRWVDNKDIQLIDERDVVPTADNRYTLKVVAVNNWISYYVNDILMASTGDYVLQKADKGQNTVIPEGHFGLLNWNGDMVFQNTKFALLDDTTAPLIDNITVRSDRGNVEKQGQFFSEEPLHIQYVSNDASQVSLDIAKHNPAATVTVEDKTGRVYTDPSHLPVNVGANYFTVKSTVIDSFGRTVTLTYRINVHRRQNDEVYYNELYRDQYHYSVKDGWANDPNGLVYYNGVYHLFHQFYDDTKWGPMHWAHATSTDLIHWKEEPIAFYPDSNGYMFSGCVVVDEHNSSGLFKTAKGGLVAIITANGNGQRMELAYSEDEGKTWQKYDRIVADWSNDPLQNQDFRDPKVFHWNNQWFMVLAGGPLRIYSSNNLKDWKVESTYPDLHTECPDMYPIVANDGVLKWVLSRGGRFYKVGDFKQVDGKWTFIADDAYKDKDQVMNFGKDSYAAMTYYVHDFGTETRPTIPKLTEVNWMNTWEDYCNLVADTVGQDFNGTFNLNLDLGLINENGQYILTQTPVKAYDSLRDVNTALHFKDVTVDANNTLLKDFKGDSYEIVSHFRPDEKTTKVGFNLRVGNGQATKVIYDLQTETLSIDRSQSGTILSAAFAKVNSQHVTKNADGSIDLHIYVDRASVEVFSKNNTVAGANQIFPNPEAVGASIIVEGGKAQADISVYQMKTIWTDKKDTAKPVAMNTTTAKELALQVGQSQDLQVYLAPASVRQDVEWTISDPSLVRTSQKGNVLHLTAVKKGKLTITAISKENPSLSKTFTISITLNNFKTNLKGLQSVTGKWYVDDETLYDSNTSSNDYYMASQKPGFKEYDYDIDLKYQRGLINLFVASGNIDPSQAYSVQFGDSETVRLYRFAGDTIAEANMGKRINDDQYHHIKVTKTKNSIIISVDGQEVMSHNFDQVDSYFNDAYVGLGLWDGAVEFQNFFVTDHATTPKPDSDPTPQPDAPEALAQERELIDPATGVRVILQKGELASIVRVKVSHIETNDAHTPAVLNAKDYDLFNITPIDKNEKVVAITKPATVLLPIDAGKVVDKVVYLPNTDKEENLPFTIVSLTDSNGKKQSYVRFTAEHFSEYGLVYQAENQTNLKSKEKQDNVAISYPLNLEQEVKVSSISRKYAANKTADVNSVQQTEPSVMSSSPKATLPDTGDHKTDLSQLGVLAMIGSFLVEIAGYFKKRKD</sequence>
<dbReference type="EC" id="3.2.1.80"/>
<dbReference type="EMBL" id="U78296">
    <property type="protein sequence ID" value="AAA26889.1"/>
    <property type="molecule type" value="Genomic_DNA"/>
</dbReference>
<dbReference type="EMBL" id="AE014133">
    <property type="protein sequence ID" value="AAN57863.1"/>
    <property type="molecule type" value="Genomic_DNA"/>
</dbReference>
<dbReference type="PIR" id="A49206">
    <property type="entry name" value="A49206"/>
</dbReference>
<dbReference type="RefSeq" id="NP_720557.1">
    <property type="nucleotide sequence ID" value="NC_004350.2"/>
</dbReference>
<dbReference type="RefSeq" id="WP_002263413.1">
    <property type="nucleotide sequence ID" value="NC_004350.2"/>
</dbReference>
<dbReference type="SMR" id="Q03174"/>
<dbReference type="STRING" id="210007.SMU_78"/>
<dbReference type="CAZy" id="CBM66">
    <property type="family name" value="Carbohydrate-Binding Module Family 66"/>
</dbReference>
<dbReference type="CAZy" id="GH32">
    <property type="family name" value="Glycoside Hydrolase Family 32"/>
</dbReference>
<dbReference type="DNASU" id="1029658"/>
<dbReference type="KEGG" id="smu:SMU_78"/>
<dbReference type="PATRIC" id="fig|210007.7.peg.67"/>
<dbReference type="eggNOG" id="COG1621">
    <property type="taxonomic scope" value="Bacteria"/>
</dbReference>
<dbReference type="eggNOG" id="COG3583">
    <property type="taxonomic scope" value="Bacteria"/>
</dbReference>
<dbReference type="eggNOG" id="COG5492">
    <property type="taxonomic scope" value="Bacteria"/>
</dbReference>
<dbReference type="HOGENOM" id="CLU_005855_0_0_9"/>
<dbReference type="OrthoDB" id="9759709at2"/>
<dbReference type="Proteomes" id="UP000002512">
    <property type="component" value="Chromosome"/>
</dbReference>
<dbReference type="GO" id="GO:0005737">
    <property type="term" value="C:cytoplasm"/>
    <property type="evidence" value="ECO:0007669"/>
    <property type="project" value="TreeGrafter"/>
</dbReference>
<dbReference type="GO" id="GO:0005576">
    <property type="term" value="C:extracellular region"/>
    <property type="evidence" value="ECO:0007669"/>
    <property type="project" value="UniProtKB-KW"/>
</dbReference>
<dbReference type="GO" id="GO:0051669">
    <property type="term" value="F:fructan beta-fructosidase activity"/>
    <property type="evidence" value="ECO:0007669"/>
    <property type="project" value="UniProtKB-EC"/>
</dbReference>
<dbReference type="GO" id="GO:0004575">
    <property type="term" value="F:sucrose alpha-glucosidase activity"/>
    <property type="evidence" value="ECO:0007669"/>
    <property type="project" value="TreeGrafter"/>
</dbReference>
<dbReference type="GO" id="GO:0005987">
    <property type="term" value="P:sucrose catabolic process"/>
    <property type="evidence" value="ECO:0007669"/>
    <property type="project" value="TreeGrafter"/>
</dbReference>
<dbReference type="CDD" id="cd18622">
    <property type="entry name" value="GH32_Inu-like"/>
    <property type="match status" value="1"/>
</dbReference>
<dbReference type="Gene3D" id="2.60.40.1080">
    <property type="match status" value="1"/>
</dbReference>
<dbReference type="Gene3D" id="2.60.120.560">
    <property type="entry name" value="Exo-inulinase, domain 1"/>
    <property type="match status" value="3"/>
</dbReference>
<dbReference type="Gene3D" id="2.115.10.20">
    <property type="entry name" value="Glycosyl hydrolase domain, family 43"/>
    <property type="match status" value="1"/>
</dbReference>
<dbReference type="InterPro" id="IPR003343">
    <property type="entry name" value="Big_2"/>
</dbReference>
<dbReference type="InterPro" id="IPR025883">
    <property type="entry name" value="Cadherin-like_b_sandwich"/>
</dbReference>
<dbReference type="InterPro" id="IPR013320">
    <property type="entry name" value="ConA-like_dom_sf"/>
</dbReference>
<dbReference type="InterPro" id="IPR001362">
    <property type="entry name" value="Glyco_hydro_32"/>
</dbReference>
<dbReference type="InterPro" id="IPR018053">
    <property type="entry name" value="Glyco_hydro_32_AS"/>
</dbReference>
<dbReference type="InterPro" id="IPR013189">
    <property type="entry name" value="Glyco_hydro_32_C"/>
</dbReference>
<dbReference type="InterPro" id="IPR013148">
    <property type="entry name" value="Glyco_hydro_32_N"/>
</dbReference>
<dbReference type="InterPro" id="IPR023296">
    <property type="entry name" value="Glyco_hydro_beta-prop_sf"/>
</dbReference>
<dbReference type="InterPro" id="IPR008964">
    <property type="entry name" value="Invasin/intimin_cell_adhesion"/>
</dbReference>
<dbReference type="InterPro" id="IPR022263">
    <property type="entry name" value="KxYKxGKxW"/>
</dbReference>
<dbReference type="InterPro" id="IPR001791">
    <property type="entry name" value="Laminin_G"/>
</dbReference>
<dbReference type="InterPro" id="IPR019931">
    <property type="entry name" value="LPXTG_anchor"/>
</dbReference>
<dbReference type="NCBIfam" id="TIGR03715">
    <property type="entry name" value="KxYKxGKxW"/>
    <property type="match status" value="1"/>
</dbReference>
<dbReference type="PANTHER" id="PTHR42800">
    <property type="entry name" value="EXOINULINASE INUD (AFU_ORTHOLOGUE AFUA_5G00480)"/>
    <property type="match status" value="1"/>
</dbReference>
<dbReference type="PANTHER" id="PTHR42800:SF1">
    <property type="entry name" value="EXOINULINASE INUD (AFU_ORTHOLOGUE AFUA_5G00480)"/>
    <property type="match status" value="1"/>
</dbReference>
<dbReference type="Pfam" id="PF02368">
    <property type="entry name" value="Big_2"/>
    <property type="match status" value="1"/>
</dbReference>
<dbReference type="Pfam" id="PF12733">
    <property type="entry name" value="Cadherin-like"/>
    <property type="match status" value="1"/>
</dbReference>
<dbReference type="Pfam" id="PF08244">
    <property type="entry name" value="Glyco_hydro_32C"/>
    <property type="match status" value="1"/>
</dbReference>
<dbReference type="Pfam" id="PF00251">
    <property type="entry name" value="Glyco_hydro_32N"/>
    <property type="match status" value="1"/>
</dbReference>
<dbReference type="Pfam" id="PF02210">
    <property type="entry name" value="Laminin_G_2"/>
    <property type="match status" value="1"/>
</dbReference>
<dbReference type="SMART" id="SM00635">
    <property type="entry name" value="BID_2"/>
    <property type="match status" value="1"/>
</dbReference>
<dbReference type="SMART" id="SM00640">
    <property type="entry name" value="Glyco_32"/>
    <property type="match status" value="1"/>
</dbReference>
<dbReference type="SUPFAM" id="SSF75005">
    <property type="entry name" value="Arabinanase/levansucrase/invertase"/>
    <property type="match status" value="1"/>
</dbReference>
<dbReference type="SUPFAM" id="SSF49899">
    <property type="entry name" value="Concanavalin A-like lectins/glucanases"/>
    <property type="match status" value="2"/>
</dbReference>
<dbReference type="SUPFAM" id="SSF49373">
    <property type="entry name" value="Invasin/intimin cell-adhesion fragments"/>
    <property type="match status" value="1"/>
</dbReference>
<dbReference type="PROSITE" id="PS00609">
    <property type="entry name" value="GLYCOSYL_HYDROL_F32"/>
    <property type="match status" value="1"/>
</dbReference>
<dbReference type="PROSITE" id="PS50847">
    <property type="entry name" value="GRAM_POS_ANCHORING"/>
    <property type="match status" value="1"/>
</dbReference>
<comment type="function">
    <text>This protein is a fructanase enzyme which degrades levans and inulins to fructose and also cleaves sucrose into glucose and fructose and can therefore function as an extracellular invertase.</text>
</comment>
<comment type="catalytic activity">
    <reaction>
        <text>Hydrolysis of terminal, non-reducing (2-&gt;1)- and (2-&gt;6)-linked beta-D-fructofuranose residues in fructans.</text>
        <dbReference type="EC" id="3.2.1.80"/>
    </reaction>
</comment>
<comment type="subcellular location">
    <subcellularLocation>
        <location evidence="6">Secreted</location>
        <location evidence="6">Cell wall</location>
        <topology evidence="6">Peptidoglycan-anchor</topology>
    </subcellularLocation>
</comment>
<comment type="induction">
    <text>By sucrose, fructan substrates and fructose.</text>
</comment>
<comment type="similarity">
    <text evidence="6">Belongs to the glycosyl hydrolase 32 family.</text>
</comment>